<sequence>MRNASGFLKTAGAPLVSATWLPPSPPPAMPTVAAGPQMERVDNGSQGAPQLFLTSALARGVSGVFVWTALLLTGHQIYSHLRSYTAPREQRFVIRLLFIVPIYAFDSWLSLLLLGGHPYYVYFDSVRDCYEAFVIYSFLTLCFQYLGGESAIMAEIRGKPIRSSCFYGTCCLRGMSYSITFLRFCKQATLQFCIVKPVMALITIILQAFDKYHDGDFNIHSGYLYVTLVYNASVSLALYALFLFYFATRDLLRPFEPVLKFLTIKAIIFLSFWQGMLLAILERCGVIPEVQAVDGTRVGAGTLAAGYQNFLICVEMLFASLALRYAFPSQVYSEKKNSPVPPAPMQSISSGLKETISPQDIVQDAIHNFSPAYQQYTQQSTHEAPGPGQGGHPAPSTHPGPASGSGGGKKSRNIEKRMLIPSEDL</sequence>
<evidence type="ECO:0000250" key="1">
    <source>
        <dbReference type="UniProtKB" id="Q1RMW2"/>
    </source>
</evidence>
<evidence type="ECO:0000250" key="2">
    <source>
        <dbReference type="UniProtKB" id="Q4QQS1"/>
    </source>
</evidence>
<evidence type="ECO:0000255" key="3"/>
<evidence type="ECO:0000256" key="4">
    <source>
        <dbReference type="SAM" id="MobiDB-lite"/>
    </source>
</evidence>
<evidence type="ECO:0000269" key="5">
    <source>
    </source>
</evidence>
<evidence type="ECO:0000269" key="6">
    <source>
    </source>
</evidence>
<evidence type="ECO:0000269" key="7">
    <source>
    </source>
</evidence>
<evidence type="ECO:0000303" key="8">
    <source>
    </source>
</evidence>
<evidence type="ECO:0000305" key="9"/>
<reference key="1">
    <citation type="journal article" date="2005" name="Science">
        <title>The transcriptional landscape of the mammalian genome.</title>
        <authorList>
            <person name="Carninci P."/>
            <person name="Kasukawa T."/>
            <person name="Katayama S."/>
            <person name="Gough J."/>
            <person name="Frith M.C."/>
            <person name="Maeda N."/>
            <person name="Oyama R."/>
            <person name="Ravasi T."/>
            <person name="Lenhard B."/>
            <person name="Wells C."/>
            <person name="Kodzius R."/>
            <person name="Shimokawa K."/>
            <person name="Bajic V.B."/>
            <person name="Brenner S.E."/>
            <person name="Batalov S."/>
            <person name="Forrest A.R."/>
            <person name="Zavolan M."/>
            <person name="Davis M.J."/>
            <person name="Wilming L.G."/>
            <person name="Aidinis V."/>
            <person name="Allen J.E."/>
            <person name="Ambesi-Impiombato A."/>
            <person name="Apweiler R."/>
            <person name="Aturaliya R.N."/>
            <person name="Bailey T.L."/>
            <person name="Bansal M."/>
            <person name="Baxter L."/>
            <person name="Beisel K.W."/>
            <person name="Bersano T."/>
            <person name="Bono H."/>
            <person name="Chalk A.M."/>
            <person name="Chiu K.P."/>
            <person name="Choudhary V."/>
            <person name="Christoffels A."/>
            <person name="Clutterbuck D.R."/>
            <person name="Crowe M.L."/>
            <person name="Dalla E."/>
            <person name="Dalrymple B.P."/>
            <person name="de Bono B."/>
            <person name="Della Gatta G."/>
            <person name="di Bernardo D."/>
            <person name="Down T."/>
            <person name="Engstrom P."/>
            <person name="Fagiolini M."/>
            <person name="Faulkner G."/>
            <person name="Fletcher C.F."/>
            <person name="Fukushima T."/>
            <person name="Furuno M."/>
            <person name="Futaki S."/>
            <person name="Gariboldi M."/>
            <person name="Georgii-Hemming P."/>
            <person name="Gingeras T.R."/>
            <person name="Gojobori T."/>
            <person name="Green R.E."/>
            <person name="Gustincich S."/>
            <person name="Harbers M."/>
            <person name="Hayashi Y."/>
            <person name="Hensch T.K."/>
            <person name="Hirokawa N."/>
            <person name="Hill D."/>
            <person name="Huminiecki L."/>
            <person name="Iacono M."/>
            <person name="Ikeo K."/>
            <person name="Iwama A."/>
            <person name="Ishikawa T."/>
            <person name="Jakt M."/>
            <person name="Kanapin A."/>
            <person name="Katoh M."/>
            <person name="Kawasawa Y."/>
            <person name="Kelso J."/>
            <person name="Kitamura H."/>
            <person name="Kitano H."/>
            <person name="Kollias G."/>
            <person name="Krishnan S.P."/>
            <person name="Kruger A."/>
            <person name="Kummerfeld S.K."/>
            <person name="Kurochkin I.V."/>
            <person name="Lareau L.F."/>
            <person name="Lazarevic D."/>
            <person name="Lipovich L."/>
            <person name="Liu J."/>
            <person name="Liuni S."/>
            <person name="McWilliam S."/>
            <person name="Madan Babu M."/>
            <person name="Madera M."/>
            <person name="Marchionni L."/>
            <person name="Matsuda H."/>
            <person name="Matsuzawa S."/>
            <person name="Miki H."/>
            <person name="Mignone F."/>
            <person name="Miyake S."/>
            <person name="Morris K."/>
            <person name="Mottagui-Tabar S."/>
            <person name="Mulder N."/>
            <person name="Nakano N."/>
            <person name="Nakauchi H."/>
            <person name="Ng P."/>
            <person name="Nilsson R."/>
            <person name="Nishiguchi S."/>
            <person name="Nishikawa S."/>
            <person name="Nori F."/>
            <person name="Ohara O."/>
            <person name="Okazaki Y."/>
            <person name="Orlando V."/>
            <person name="Pang K.C."/>
            <person name="Pavan W.J."/>
            <person name="Pavesi G."/>
            <person name="Pesole G."/>
            <person name="Petrovsky N."/>
            <person name="Piazza S."/>
            <person name="Reed J."/>
            <person name="Reid J.F."/>
            <person name="Ring B.Z."/>
            <person name="Ringwald M."/>
            <person name="Rost B."/>
            <person name="Ruan Y."/>
            <person name="Salzberg S.L."/>
            <person name="Sandelin A."/>
            <person name="Schneider C."/>
            <person name="Schoenbach C."/>
            <person name="Sekiguchi K."/>
            <person name="Semple C.A."/>
            <person name="Seno S."/>
            <person name="Sessa L."/>
            <person name="Sheng Y."/>
            <person name="Shibata Y."/>
            <person name="Shimada H."/>
            <person name="Shimada K."/>
            <person name="Silva D."/>
            <person name="Sinclair B."/>
            <person name="Sperling S."/>
            <person name="Stupka E."/>
            <person name="Sugiura K."/>
            <person name="Sultana R."/>
            <person name="Takenaka Y."/>
            <person name="Taki K."/>
            <person name="Tammoja K."/>
            <person name="Tan S.L."/>
            <person name="Tang S."/>
            <person name="Taylor M.S."/>
            <person name="Tegner J."/>
            <person name="Teichmann S.A."/>
            <person name="Ueda H.R."/>
            <person name="van Nimwegen E."/>
            <person name="Verardo R."/>
            <person name="Wei C.L."/>
            <person name="Yagi K."/>
            <person name="Yamanishi H."/>
            <person name="Zabarovsky E."/>
            <person name="Zhu S."/>
            <person name="Zimmer A."/>
            <person name="Hide W."/>
            <person name="Bult C."/>
            <person name="Grimmond S.M."/>
            <person name="Teasdale R.D."/>
            <person name="Liu E.T."/>
            <person name="Brusic V."/>
            <person name="Quackenbush J."/>
            <person name="Wahlestedt C."/>
            <person name="Mattick J.S."/>
            <person name="Hume D.A."/>
            <person name="Kai C."/>
            <person name="Sasaki D."/>
            <person name="Tomaru Y."/>
            <person name="Fukuda S."/>
            <person name="Kanamori-Katayama M."/>
            <person name="Suzuki M."/>
            <person name="Aoki J."/>
            <person name="Arakawa T."/>
            <person name="Iida J."/>
            <person name="Imamura K."/>
            <person name="Itoh M."/>
            <person name="Kato T."/>
            <person name="Kawaji H."/>
            <person name="Kawagashira N."/>
            <person name="Kawashima T."/>
            <person name="Kojima M."/>
            <person name="Kondo S."/>
            <person name="Konno H."/>
            <person name="Nakano K."/>
            <person name="Ninomiya N."/>
            <person name="Nishio T."/>
            <person name="Okada M."/>
            <person name="Plessy C."/>
            <person name="Shibata K."/>
            <person name="Shiraki T."/>
            <person name="Suzuki S."/>
            <person name="Tagami M."/>
            <person name="Waki K."/>
            <person name="Watahiki A."/>
            <person name="Okamura-Oho Y."/>
            <person name="Suzuki H."/>
            <person name="Kawai J."/>
            <person name="Hayashizaki Y."/>
        </authorList>
    </citation>
    <scope>NUCLEOTIDE SEQUENCE [LARGE SCALE MRNA]</scope>
    <source>
        <strain>C57BL/6J</strain>
        <tissue>Pancreas</tissue>
    </source>
</reference>
<reference key="2">
    <citation type="journal article" date="2004" name="Genome Res.">
        <title>The status, quality, and expansion of the NIH full-length cDNA project: the Mammalian Gene Collection (MGC).</title>
        <authorList>
            <consortium name="The MGC Project Team"/>
        </authorList>
    </citation>
    <scope>NUCLEOTIDE SEQUENCE [LARGE SCALE MRNA]</scope>
    <source>
        <strain>FVB/N</strain>
        <tissue>Colon</tissue>
    </source>
</reference>
<reference key="3">
    <citation type="journal article" date="2007" name="Reproduction">
        <title>Sex-specific expression of a novel gene Tmem184a during mouse testis differentiation.</title>
        <authorList>
            <person name="Svingen T."/>
            <person name="Beverdam A."/>
            <person name="Bernard P."/>
            <person name="McClive P."/>
            <person name="Harley V.R."/>
            <person name="Sinclair A.H."/>
            <person name="Koopman P."/>
        </authorList>
    </citation>
    <scope>TISSUE SPECIFICITY</scope>
    <scope>DEVELOPMENTAL STAGE</scope>
</reference>
<reference key="4">
    <citation type="journal article" date="2008" name="Development">
        <title>Sdmg1 is a conserved transmembrane protein associated with germ cell sex determination and germline-soma interactions in mice.</title>
        <authorList>
            <person name="Best D."/>
            <person name="Sahlender D.A."/>
            <person name="Walther N."/>
            <person name="Peden A.A."/>
            <person name="Adams I.R."/>
        </authorList>
    </citation>
    <scope>SUBCELLULAR LOCATION</scope>
    <scope>FUNCTION</scope>
    <scope>TISSUE SPECIFICITY</scope>
    <scope>DEVELOPMENTAL STAGE</scope>
</reference>
<reference key="5">
    <citation type="journal article" date="2009" name="Dev. Dyn.">
        <title>Sdmg1 is a component of secretory granules in mouse secretory exocrine tissues.</title>
        <authorList>
            <person name="Best D."/>
            <person name="Adams I.R."/>
        </authorList>
    </citation>
    <scope>TISSUE SPECIFICITY</scope>
    <scope>SUBCELLULAR LOCATION</scope>
    <scope>FUNCTION</scope>
</reference>
<organism>
    <name type="scientific">Mus musculus</name>
    <name type="common">Mouse</name>
    <dbReference type="NCBI Taxonomy" id="10090"/>
    <lineage>
        <taxon>Eukaryota</taxon>
        <taxon>Metazoa</taxon>
        <taxon>Chordata</taxon>
        <taxon>Craniata</taxon>
        <taxon>Vertebrata</taxon>
        <taxon>Euteleostomi</taxon>
        <taxon>Mammalia</taxon>
        <taxon>Eutheria</taxon>
        <taxon>Euarchontoglires</taxon>
        <taxon>Glires</taxon>
        <taxon>Rodentia</taxon>
        <taxon>Myomorpha</taxon>
        <taxon>Muroidea</taxon>
        <taxon>Muridae</taxon>
        <taxon>Murinae</taxon>
        <taxon>Mus</taxon>
        <taxon>Mus</taxon>
    </lineage>
</organism>
<accession>Q3UFJ6</accession>
<accession>Q8BII8</accession>
<accession>Q8K1B0</accession>
<proteinExistence type="evidence at protein level"/>
<feature type="chain" id="PRO_0000300468" description="Transmembrane protein 184A">
    <location>
        <begin position="1"/>
        <end position="425"/>
    </location>
</feature>
<feature type="transmembrane region" description="Helical" evidence="3">
    <location>
        <begin position="51"/>
        <end position="71"/>
    </location>
</feature>
<feature type="transmembrane region" description="Helical" evidence="3">
    <location>
        <begin position="96"/>
        <end position="116"/>
    </location>
</feature>
<feature type="transmembrane region" description="Helical" evidence="3">
    <location>
        <begin position="133"/>
        <end position="153"/>
    </location>
</feature>
<feature type="transmembrane region" description="Helical" evidence="3">
    <location>
        <begin position="189"/>
        <end position="209"/>
    </location>
</feature>
<feature type="transmembrane region" description="Helical" evidence="3">
    <location>
        <begin position="226"/>
        <end position="246"/>
    </location>
</feature>
<feature type="transmembrane region" description="Helical" evidence="3">
    <location>
        <begin position="261"/>
        <end position="281"/>
    </location>
</feature>
<feature type="transmembrane region" description="Helical" evidence="3">
    <location>
        <begin position="303"/>
        <end position="323"/>
    </location>
</feature>
<feature type="region of interest" description="Disordered" evidence="4">
    <location>
        <begin position="375"/>
        <end position="425"/>
    </location>
</feature>
<feature type="compositionally biased region" description="Low complexity" evidence="4">
    <location>
        <begin position="392"/>
        <end position="402"/>
    </location>
</feature>
<feature type="sequence conflict" description="In Ref. 2; AAH26659." evidence="9" ref="2">
    <original>L</original>
    <variation>P</variation>
    <location>
        <position position="243"/>
    </location>
</feature>
<feature type="sequence conflict" description="In Ref. 1; BAC34286." evidence="9" ref="1">
    <original>M</original>
    <variation>I</variation>
    <location>
        <position position="345"/>
    </location>
</feature>
<gene>
    <name type="primary">Tmem184a</name>
    <name evidence="8" type="synonym">Sdmg1</name>
</gene>
<keyword id="KW-1003">Cell membrane</keyword>
<keyword id="KW-0963">Cytoplasm</keyword>
<keyword id="KW-0968">Cytoplasmic vesicle</keyword>
<keyword id="KW-0967">Endosome</keyword>
<keyword id="KW-0472">Membrane</keyword>
<keyword id="KW-1185">Reference proteome</keyword>
<keyword id="KW-0812">Transmembrane</keyword>
<keyword id="KW-1133">Transmembrane helix</keyword>
<comment type="function">
    <text evidence="2 6 7">Acts as a heparin receptor in vascular cells (By similarity). May be involved in vesicle transport in exocrine cells and Sertoli cells (PubMed:18321981, PubMed:19097053).</text>
</comment>
<comment type="subcellular location">
    <subcellularLocation>
        <location evidence="1">Cell membrane</location>
        <topology evidence="3">Multi-pass membrane protein</topology>
    </subcellularLocation>
    <subcellularLocation>
        <location evidence="1">Cytoplasm</location>
        <location evidence="1">Perinuclear region</location>
    </subcellularLocation>
    <subcellularLocation>
        <location evidence="1">Cytoplasmic vesicle membrane</location>
        <topology evidence="3">Multi-pass membrane protein</topology>
    </subcellularLocation>
    <subcellularLocation>
        <location evidence="6">Early endosome membrane</location>
        <topology evidence="9">Multi-pass membrane protein</topology>
    </subcellularLocation>
    <subcellularLocation>
        <location evidence="6 7">Endosome</location>
    </subcellularLocation>
    <subcellularLocation>
        <location evidence="7">Cytoplasmic vesicle</location>
        <location evidence="7">Secretory vesicle membrane</location>
    </subcellularLocation>
    <text evidence="7">Colocalizes with the secretory granule marker VAMP2 in pancreatic acinar cells (PubMed:19097053).</text>
</comment>
<comment type="tissue specificity">
    <text evidence="5 7">Expressed in testis, pancreas, parotid salivary gland and mammary gland (at protein level) (PubMed:17616727, PubMed:19097053).</text>
</comment>
<comment type="developmental stage">
    <text evidence="5 6 7">Up-regulated in the testes from 11.5 dpc until 16.5 dpc, expression is maintained in the male Sertoli cells throughout embryonic development and into adulthood. Not expressed in the female gonad during embryonic development (PubMed:17616727, PubMed:18321981). Expressed in the granulosa cells, a few days after birth, expression is maintained in granulosa cells during folliculogenesis (PubMed:17616727, PubMed:18321981). Up-regulated during embryonic pancreatic acinar cell differentiation (PubMed:19097053).</text>
</comment>
<comment type="similarity">
    <text evidence="9">Belongs to the TMEM184 family.</text>
</comment>
<comment type="sequence caution" evidence="9">
    <conflict type="erroneous initiation">
        <sequence resource="EMBL-CDS" id="BAC34286"/>
    </conflict>
</comment>
<dbReference type="EMBL" id="AK050489">
    <property type="protein sequence ID" value="BAC34286.1"/>
    <property type="status" value="ALT_INIT"/>
    <property type="molecule type" value="mRNA"/>
</dbReference>
<dbReference type="EMBL" id="AK148454">
    <property type="protein sequence ID" value="BAE28564.1"/>
    <property type="molecule type" value="mRNA"/>
</dbReference>
<dbReference type="EMBL" id="BC026659">
    <property type="protein sequence ID" value="AAH26659.1"/>
    <property type="molecule type" value="mRNA"/>
</dbReference>
<dbReference type="CCDS" id="CCDS39354.1"/>
<dbReference type="RefSeq" id="NP_001155020.1">
    <property type="nucleotide sequence ID" value="NM_001161548.1"/>
</dbReference>
<dbReference type="RefSeq" id="NP_659163.3">
    <property type="nucleotide sequence ID" value="NM_144914.3"/>
</dbReference>
<dbReference type="RefSeq" id="XP_006504733.1">
    <property type="nucleotide sequence ID" value="XM_006504670.5"/>
</dbReference>
<dbReference type="RefSeq" id="XP_006504734.1">
    <property type="nucleotide sequence ID" value="XM_006504671.3"/>
</dbReference>
<dbReference type="FunCoup" id="Q3UFJ6">
    <property type="interactions" value="523"/>
</dbReference>
<dbReference type="STRING" id="10090.ENSMUSP00000035399"/>
<dbReference type="TCDB" id="2.A.82.1.10">
    <property type="family name" value="the organic solute transporter (ost) family"/>
</dbReference>
<dbReference type="GlyGen" id="Q3UFJ6">
    <property type="glycosylation" value="1 site, 1 N-linked glycan (1 site)"/>
</dbReference>
<dbReference type="PhosphoSitePlus" id="Q3UFJ6"/>
<dbReference type="PaxDb" id="10090-ENSMUSP00000035399"/>
<dbReference type="ProteomicsDB" id="254527"/>
<dbReference type="TopDownProteomics" id="Q3UFJ6"/>
<dbReference type="DNASU" id="231832"/>
<dbReference type="Ensembl" id="ENSMUST00000110832.8">
    <property type="protein sequence ID" value="ENSMUSP00000106456.2"/>
    <property type="gene ID" value="ENSMUSG00000036687.14"/>
</dbReference>
<dbReference type="GeneID" id="231832"/>
<dbReference type="KEGG" id="mmu:231832"/>
<dbReference type="UCSC" id="uc009ahe.2">
    <property type="organism name" value="mouse"/>
</dbReference>
<dbReference type="AGR" id="MGI:2385897"/>
<dbReference type="CTD" id="202915"/>
<dbReference type="MGI" id="MGI:2385897">
    <property type="gene designation" value="Tmem184a"/>
</dbReference>
<dbReference type="VEuPathDB" id="HostDB:ENSMUSG00000036687"/>
<dbReference type="eggNOG" id="KOG2641">
    <property type="taxonomic scope" value="Eukaryota"/>
</dbReference>
<dbReference type="GeneTree" id="ENSGT00940000153861"/>
<dbReference type="HOGENOM" id="CLU_012923_3_0_1"/>
<dbReference type="InParanoid" id="Q3UFJ6"/>
<dbReference type="OrthoDB" id="5348404at2759"/>
<dbReference type="PhylomeDB" id="Q3UFJ6"/>
<dbReference type="BioGRID-ORCS" id="231832">
    <property type="hits" value="2 hits in 76 CRISPR screens"/>
</dbReference>
<dbReference type="ChiTaRS" id="Tmem184a">
    <property type="organism name" value="mouse"/>
</dbReference>
<dbReference type="PRO" id="PR:Q3UFJ6"/>
<dbReference type="Proteomes" id="UP000000589">
    <property type="component" value="Chromosome 5"/>
</dbReference>
<dbReference type="RNAct" id="Q3UFJ6">
    <property type="molecule type" value="protein"/>
</dbReference>
<dbReference type="Bgee" id="ENSMUSG00000036687">
    <property type="expression patterns" value="Expressed in epithelium of stomach and 111 other cell types or tissues"/>
</dbReference>
<dbReference type="ExpressionAtlas" id="Q3UFJ6">
    <property type="expression patterns" value="baseline and differential"/>
</dbReference>
<dbReference type="GO" id="GO:0030659">
    <property type="term" value="C:cytoplasmic vesicle membrane"/>
    <property type="evidence" value="ECO:0000250"/>
    <property type="project" value="UniProtKB"/>
</dbReference>
<dbReference type="GO" id="GO:0031901">
    <property type="term" value="C:early endosome membrane"/>
    <property type="evidence" value="ECO:0000314"/>
    <property type="project" value="MGI"/>
</dbReference>
<dbReference type="GO" id="GO:0005768">
    <property type="term" value="C:endosome"/>
    <property type="evidence" value="ECO:0000314"/>
    <property type="project" value="MGI"/>
</dbReference>
<dbReference type="GO" id="GO:0048471">
    <property type="term" value="C:perinuclear region of cytoplasm"/>
    <property type="evidence" value="ECO:0000250"/>
    <property type="project" value="UniProtKB"/>
</dbReference>
<dbReference type="GO" id="GO:0005886">
    <property type="term" value="C:plasma membrane"/>
    <property type="evidence" value="ECO:0000250"/>
    <property type="project" value="UniProtKB"/>
</dbReference>
<dbReference type="GO" id="GO:0030667">
    <property type="term" value="C:secretory granule membrane"/>
    <property type="evidence" value="ECO:0000314"/>
    <property type="project" value="UniProtKB"/>
</dbReference>
<dbReference type="GO" id="GO:0030658">
    <property type="term" value="C:transport vesicle membrane"/>
    <property type="evidence" value="ECO:0007669"/>
    <property type="project" value="UniProtKB-SubCell"/>
</dbReference>
<dbReference type="GO" id="GO:0008201">
    <property type="term" value="F:heparin binding"/>
    <property type="evidence" value="ECO:0000250"/>
    <property type="project" value="UniProtKB"/>
</dbReference>
<dbReference type="GO" id="GO:0018992">
    <property type="term" value="P:germ-line sex determination"/>
    <property type="evidence" value="ECO:0000315"/>
    <property type="project" value="MGI"/>
</dbReference>
<dbReference type="GO" id="GO:0032880">
    <property type="term" value="P:regulation of protein localization"/>
    <property type="evidence" value="ECO:0000315"/>
    <property type="project" value="MGI"/>
</dbReference>
<dbReference type="GO" id="GO:0051046">
    <property type="term" value="P:regulation of secretion"/>
    <property type="evidence" value="ECO:0000315"/>
    <property type="project" value="MGI"/>
</dbReference>
<dbReference type="InterPro" id="IPR005178">
    <property type="entry name" value="Ostalpha/TMEM184C"/>
</dbReference>
<dbReference type="PANTHER" id="PTHR23423">
    <property type="entry name" value="ORGANIC SOLUTE TRANSPORTER-RELATED"/>
    <property type="match status" value="1"/>
</dbReference>
<dbReference type="Pfam" id="PF03619">
    <property type="entry name" value="Solute_trans_a"/>
    <property type="match status" value="1"/>
</dbReference>
<dbReference type="SMART" id="SM01417">
    <property type="entry name" value="Solute_trans_a"/>
    <property type="match status" value="1"/>
</dbReference>
<protein>
    <recommendedName>
        <fullName>Transmembrane protein 184A</fullName>
    </recommendedName>
    <alternativeName>
        <fullName evidence="8">Sexually dimorphic expressed in male gonads 1</fullName>
    </alternativeName>
</protein>
<name>T184A_MOUSE</name>